<proteinExistence type="inferred from homology"/>
<accession>B5YDV7</accession>
<organism>
    <name type="scientific">Dictyoglomus thermophilum (strain ATCC 35947 / DSM 3960 / H-6-12)</name>
    <dbReference type="NCBI Taxonomy" id="309799"/>
    <lineage>
        <taxon>Bacteria</taxon>
        <taxon>Pseudomonadati</taxon>
        <taxon>Dictyoglomota</taxon>
        <taxon>Dictyoglomia</taxon>
        <taxon>Dictyoglomales</taxon>
        <taxon>Dictyoglomaceae</taxon>
        <taxon>Dictyoglomus</taxon>
    </lineage>
</organism>
<comment type="function">
    <text evidence="1">One of the primary rRNA binding proteins, it binds directly to 16S rRNA central domain where it helps coordinate assembly of the platform of the 30S subunit.</text>
</comment>
<comment type="subunit">
    <text evidence="1">Part of the 30S ribosomal subunit. Contacts proteins S5 and S12.</text>
</comment>
<comment type="similarity">
    <text evidence="1">Belongs to the universal ribosomal protein uS8 family.</text>
</comment>
<reference key="1">
    <citation type="journal article" date="2014" name="Genome Announc.">
        <title>Complete Genome Sequence of the Extreme Thermophile Dictyoglomus thermophilum H-6-12.</title>
        <authorList>
            <person name="Coil D.A."/>
            <person name="Badger J.H."/>
            <person name="Forberger H.C."/>
            <person name="Riggs F."/>
            <person name="Madupu R."/>
            <person name="Fedorova N."/>
            <person name="Ward N."/>
            <person name="Robb F.T."/>
            <person name="Eisen J.A."/>
        </authorList>
    </citation>
    <scope>NUCLEOTIDE SEQUENCE [LARGE SCALE GENOMIC DNA]</scope>
    <source>
        <strain>ATCC 35947 / DSM 3960 / H-6-12</strain>
    </source>
</reference>
<evidence type="ECO:0000255" key="1">
    <source>
        <dbReference type="HAMAP-Rule" id="MF_01302"/>
    </source>
</evidence>
<evidence type="ECO:0000305" key="2"/>
<protein>
    <recommendedName>
        <fullName evidence="1">Small ribosomal subunit protein uS8</fullName>
    </recommendedName>
    <alternativeName>
        <fullName evidence="2">30S ribosomal protein S8</fullName>
    </alternativeName>
</protein>
<feature type="chain" id="PRO_1000140545" description="Small ribosomal subunit protein uS8">
    <location>
        <begin position="1"/>
        <end position="131"/>
    </location>
</feature>
<keyword id="KW-0687">Ribonucleoprotein</keyword>
<keyword id="KW-0689">Ribosomal protein</keyword>
<keyword id="KW-0694">RNA-binding</keyword>
<keyword id="KW-0699">rRNA-binding</keyword>
<dbReference type="EMBL" id="CP001146">
    <property type="protein sequence ID" value="ACI19911.1"/>
    <property type="molecule type" value="Genomic_DNA"/>
</dbReference>
<dbReference type="RefSeq" id="WP_012548543.1">
    <property type="nucleotide sequence ID" value="NC_011297.1"/>
</dbReference>
<dbReference type="SMR" id="B5YDV7"/>
<dbReference type="STRING" id="309799.DICTH_0851"/>
<dbReference type="PaxDb" id="309799-DICTH_0851"/>
<dbReference type="KEGG" id="dth:DICTH_0851"/>
<dbReference type="eggNOG" id="COG0096">
    <property type="taxonomic scope" value="Bacteria"/>
</dbReference>
<dbReference type="HOGENOM" id="CLU_098428_0_0_0"/>
<dbReference type="OrthoDB" id="9802617at2"/>
<dbReference type="Proteomes" id="UP000001733">
    <property type="component" value="Chromosome"/>
</dbReference>
<dbReference type="GO" id="GO:1990904">
    <property type="term" value="C:ribonucleoprotein complex"/>
    <property type="evidence" value="ECO:0007669"/>
    <property type="project" value="UniProtKB-KW"/>
</dbReference>
<dbReference type="GO" id="GO:0005840">
    <property type="term" value="C:ribosome"/>
    <property type="evidence" value="ECO:0007669"/>
    <property type="project" value="UniProtKB-KW"/>
</dbReference>
<dbReference type="GO" id="GO:0019843">
    <property type="term" value="F:rRNA binding"/>
    <property type="evidence" value="ECO:0007669"/>
    <property type="project" value="UniProtKB-UniRule"/>
</dbReference>
<dbReference type="GO" id="GO:0003735">
    <property type="term" value="F:structural constituent of ribosome"/>
    <property type="evidence" value="ECO:0007669"/>
    <property type="project" value="InterPro"/>
</dbReference>
<dbReference type="GO" id="GO:0006412">
    <property type="term" value="P:translation"/>
    <property type="evidence" value="ECO:0007669"/>
    <property type="project" value="UniProtKB-UniRule"/>
</dbReference>
<dbReference type="FunFam" id="3.30.1370.30:FF:000002">
    <property type="entry name" value="30S ribosomal protein S8"/>
    <property type="match status" value="1"/>
</dbReference>
<dbReference type="FunFam" id="3.30.1490.10:FF:000001">
    <property type="entry name" value="30S ribosomal protein S8"/>
    <property type="match status" value="1"/>
</dbReference>
<dbReference type="Gene3D" id="3.30.1370.30">
    <property type="match status" value="1"/>
</dbReference>
<dbReference type="Gene3D" id="3.30.1490.10">
    <property type="match status" value="1"/>
</dbReference>
<dbReference type="HAMAP" id="MF_01302_B">
    <property type="entry name" value="Ribosomal_uS8_B"/>
    <property type="match status" value="1"/>
</dbReference>
<dbReference type="InterPro" id="IPR000630">
    <property type="entry name" value="Ribosomal_uS8"/>
</dbReference>
<dbReference type="InterPro" id="IPR047863">
    <property type="entry name" value="Ribosomal_uS8_CS"/>
</dbReference>
<dbReference type="InterPro" id="IPR035987">
    <property type="entry name" value="Ribosomal_uS8_sf"/>
</dbReference>
<dbReference type="NCBIfam" id="NF001109">
    <property type="entry name" value="PRK00136.1"/>
    <property type="match status" value="1"/>
</dbReference>
<dbReference type="PANTHER" id="PTHR11758">
    <property type="entry name" value="40S RIBOSOMAL PROTEIN S15A"/>
    <property type="match status" value="1"/>
</dbReference>
<dbReference type="Pfam" id="PF00410">
    <property type="entry name" value="Ribosomal_S8"/>
    <property type="match status" value="1"/>
</dbReference>
<dbReference type="SUPFAM" id="SSF56047">
    <property type="entry name" value="Ribosomal protein S8"/>
    <property type="match status" value="1"/>
</dbReference>
<dbReference type="PROSITE" id="PS00053">
    <property type="entry name" value="RIBOSOMAL_S8"/>
    <property type="match status" value="1"/>
</dbReference>
<sequence length="131" mass="14966">MTVTDPIADMLVRIKNASMRRHPTVDVPYSKMKEKILEILLREGYIARYEVIGEIPQKYIRVYLKYKGKTPVIQDVKRVSKPGRRYYVNKEEIPRVLGGLGIAILSTSKGIMTDKEARLLGVGGELICMVW</sequence>
<gene>
    <name evidence="1" type="primary">rpsH</name>
    <name type="ordered locus">DICTH_0851</name>
</gene>
<name>RS8_DICT6</name>